<reference key="1">
    <citation type="journal article" date="2005" name="Toxicon">
        <title>The Brazilian scorpion Tityus costatus Karsch: genes, peptides and function.</title>
        <authorList>
            <person name="Diego-Garcia E."/>
            <person name="Batista C.V.F."/>
            <person name="Garcia-Gomez B.I."/>
            <person name="Lucas S."/>
            <person name="Candido D.M."/>
            <person name="Gomez-Lagunas F."/>
            <person name="Possani L.D."/>
        </authorList>
    </citation>
    <scope>NUCLEOTIDE SEQUENCE [MRNA]</scope>
    <scope>PROTEIN SEQUENCE OF 20-50</scope>
    <scope>PROTEIN SEQUENCE OF 28-59</scope>
    <scope>MASS SPECTROMETRY</scope>
    <scope>SUBCELLULAR LOCATION</scope>
    <source>
        <tissue>Venom</tissue>
        <tissue>Venom gland</tissue>
    </source>
</reference>
<dbReference type="EMBL" id="AY740694">
    <property type="protein sequence ID" value="AAW72464.1"/>
    <property type="molecule type" value="mRNA"/>
</dbReference>
<dbReference type="EMBL" id="AY740695">
    <property type="protein sequence ID" value="AAW72465.1"/>
    <property type="molecule type" value="mRNA"/>
</dbReference>
<dbReference type="SMR" id="Q5G8A6"/>
<dbReference type="GO" id="GO:0005576">
    <property type="term" value="C:extracellular region"/>
    <property type="evidence" value="ECO:0007669"/>
    <property type="project" value="UniProtKB-SubCell"/>
</dbReference>
<dbReference type="GO" id="GO:0015459">
    <property type="term" value="F:potassium channel regulator activity"/>
    <property type="evidence" value="ECO:0007669"/>
    <property type="project" value="UniProtKB-KW"/>
</dbReference>
<dbReference type="GO" id="GO:0090729">
    <property type="term" value="F:toxin activity"/>
    <property type="evidence" value="ECO:0007669"/>
    <property type="project" value="UniProtKB-KW"/>
</dbReference>
<dbReference type="GO" id="GO:0042742">
    <property type="term" value="P:defense response to bacterium"/>
    <property type="evidence" value="ECO:0007669"/>
    <property type="project" value="UniProtKB-KW"/>
</dbReference>
<dbReference type="InterPro" id="IPR029237">
    <property type="entry name" value="Long_scorpion_toxin_alpha/beta"/>
</dbReference>
<dbReference type="Pfam" id="PF14866">
    <property type="entry name" value="Scorpion_toxin_alpha-beta"/>
    <property type="match status" value="1"/>
</dbReference>
<dbReference type="PROSITE" id="PS51862">
    <property type="entry name" value="BSPN_CSAB"/>
    <property type="match status" value="1"/>
</dbReference>
<protein>
    <recommendedName>
        <fullName evidence="6">Scorpine-like peptide Tco 41.46-2</fullName>
    </recommendedName>
    <component>
        <recommendedName>
            <fullName evidence="6">Scorpine-like peptide Tco 42.14</fullName>
        </recommendedName>
        <alternativeName>
            <fullName>Tco-beta-KTx</fullName>
            <shortName>TcobetaKTx</shortName>
        </alternativeName>
    </component>
    <component>
        <recommendedName>
            <fullName evidence="2">Cryptide Pep-3</fullName>
        </recommendedName>
    </component>
</protein>
<name>KBX1_TITCO</name>
<feature type="signal peptide" evidence="5">
    <location>
        <begin position="1"/>
        <end position="19"/>
    </location>
</feature>
<feature type="chain" id="PRO_0000231507" description="Scorpine-like peptide Tco 41.46-2" evidence="8">
    <location>
        <begin position="20"/>
        <end position="87"/>
    </location>
</feature>
<feature type="chain" id="PRO_0000231508" description="Scorpine-like peptide Tco 42.14" evidence="8">
    <location>
        <begin position="28"/>
        <end position="87"/>
    </location>
</feature>
<feature type="peptide" id="PRO_0000461725" description="Cryptide Pep-3" evidence="2">
    <location>
        <begin position="32"/>
        <end position="41"/>
    </location>
</feature>
<feature type="domain" description="BetaSPN-type CS-alpha/beta" evidence="4">
    <location>
        <begin position="53"/>
        <end position="87"/>
    </location>
</feature>
<feature type="disulfide bond" evidence="4">
    <location>
        <begin position="56"/>
        <end position="77"/>
    </location>
</feature>
<feature type="disulfide bond" evidence="4">
    <location>
        <begin position="63"/>
        <end position="82"/>
    </location>
</feature>
<feature type="disulfide bond" evidence="4">
    <location>
        <begin position="67"/>
        <end position="84"/>
    </location>
</feature>
<feature type="sequence conflict" description="In Ref. 1; AAW72464." evidence="7" ref="1">
    <original>L</original>
    <variation>P</variation>
    <location>
        <position position="7"/>
    </location>
</feature>
<accession>Q5G8A6</accession>
<accession>Q5G8A7</accession>
<proteinExistence type="evidence at protein level"/>
<sequence length="87" mass="9776">MERKLALLLFLGMVTLASCGLREKHVQKLVALIPNDQLRSILKAVVHKVAKTQFGCPAYEGYCNNHCQDIERKDGECHGFKCKCAKD</sequence>
<evidence type="ECO:0000250" key="1">
    <source>
        <dbReference type="UniProtKB" id="A9XE60"/>
    </source>
</evidence>
<evidence type="ECO:0000250" key="2">
    <source>
        <dbReference type="UniProtKB" id="P0DRE8"/>
    </source>
</evidence>
<evidence type="ECO:0000250" key="3">
    <source>
        <dbReference type="UniProtKB" id="P69940"/>
    </source>
</evidence>
<evidence type="ECO:0000255" key="4">
    <source>
        <dbReference type="PROSITE-ProRule" id="PRU01209"/>
    </source>
</evidence>
<evidence type="ECO:0000269" key="5">
    <source>
    </source>
</evidence>
<evidence type="ECO:0000303" key="6">
    <source>
    </source>
</evidence>
<evidence type="ECO:0000305" key="7"/>
<evidence type="ECO:0000305" key="8">
    <source>
    </source>
</evidence>
<comment type="function">
    <molecule>Scorpine-like peptide Tco 41.46-2</molecule>
    <text evidence="1">May have antibacterial activity.</text>
</comment>
<comment type="function">
    <molecule>Scorpine-like peptide Tco 42.14</molecule>
    <text evidence="3">Inhibits voltage-gated potassium channel.</text>
</comment>
<comment type="function">
    <molecule>Cryptide Pep-3</molecule>
    <text evidence="2">Does not induce hemolytic activity, lactate dehydrogenase (LDH) release from mast cells, mast cell degranulation, and antimicrobial effects. In vivo, injection into mice causes moderate edema formation, but induces very weak or no change in nociceptive sensibility. It also reduces mice locomotion, suggesting an increase in anxiety, but causes no alteration in rearing (standing on hind limbs).</text>
</comment>
<comment type="subcellular location">
    <subcellularLocation>
        <location evidence="5">Secreted</location>
    </subcellularLocation>
</comment>
<comment type="tissue specificity">
    <text evidence="8">Expressed by the venom gland.</text>
</comment>
<comment type="mass spectrometry" mass="7678.0" method="Electrospray" evidence="5">
    <molecule>Scorpine-like peptide Tco 41.46-2</molecule>
</comment>
<comment type="mass spectrometry" mass="6730.0" method="Electrospray" evidence="5">
    <molecule>Scorpine-like peptide Tco 42.14</molecule>
</comment>
<comment type="miscellaneous">
    <text evidence="7">The primary structure of this cryptide Pep-3 is identical to that of cryptide Pep-3 from other Tityus species (AC P0DRE8, AC P69940, AC P0C2F3).</text>
</comment>
<comment type="similarity">
    <text evidence="7">Belongs to the long chain scorpion toxin family. Class 1 subfamily.</text>
</comment>
<organism>
    <name type="scientific">Tityus costatus</name>
    <name type="common">Brazilian scorpion</name>
    <dbReference type="NCBI Taxonomy" id="309814"/>
    <lineage>
        <taxon>Eukaryota</taxon>
        <taxon>Metazoa</taxon>
        <taxon>Ecdysozoa</taxon>
        <taxon>Arthropoda</taxon>
        <taxon>Chelicerata</taxon>
        <taxon>Arachnida</taxon>
        <taxon>Scorpiones</taxon>
        <taxon>Buthida</taxon>
        <taxon>Buthoidea</taxon>
        <taxon>Buthidae</taxon>
        <taxon>Tityus</taxon>
    </lineage>
</organism>
<keyword id="KW-0044">Antibiotic</keyword>
<keyword id="KW-0929">Antimicrobial</keyword>
<keyword id="KW-0903">Direct protein sequencing</keyword>
<keyword id="KW-1015">Disulfide bond</keyword>
<keyword id="KW-0872">Ion channel impairing toxin</keyword>
<keyword id="KW-0528">Neurotoxin</keyword>
<keyword id="KW-0632">Potassium channel impairing toxin</keyword>
<keyword id="KW-0964">Secreted</keyword>
<keyword id="KW-0732">Signal</keyword>
<keyword id="KW-0800">Toxin</keyword>